<keyword id="KW-0903">Direct protein sequencing</keyword>
<keyword id="KW-0325">Glycoprotein</keyword>
<keyword id="KW-0430">Lectin</keyword>
<keyword id="KW-0873">Pyrrolidone carboxylic acid</keyword>
<keyword id="KW-1185">Reference proteome</keyword>
<keyword id="KW-0732">Signal</keyword>
<name>SPBP_RAT</name>
<comment type="function">
    <text>Spermine-binding protein is an androgen regulated ventral prostate glycoprotein that binds various polyamines.</text>
</comment>
<comment type="tissue specificity">
    <text>Prostate.</text>
</comment>
<comment type="similarity">
    <text evidence="4">To mouse SBP.</text>
</comment>
<evidence type="ECO:0000255" key="1">
    <source>
        <dbReference type="PROSITE-ProRule" id="PRU01088"/>
    </source>
</evidence>
<evidence type="ECO:0000256" key="2">
    <source>
        <dbReference type="SAM" id="MobiDB-lite"/>
    </source>
</evidence>
<evidence type="ECO:0000269" key="3">
    <source>
    </source>
</evidence>
<evidence type="ECO:0000305" key="4"/>
<reference key="1">
    <citation type="journal article" date="1987" name="J. Biol. Chem.">
        <title>Prostatic spermine-binding protein. Cloning and nucleotide sequence of cDNA, amino acid sequence, and androgenic control of mRNA level.</title>
        <authorList>
            <person name="Chang C."/>
            <person name="Saltzman A.G."/>
            <person name="Hiipakka R.A."/>
            <person name="Huang I.-Y."/>
            <person name="Liao S."/>
        </authorList>
    </citation>
    <scope>NUCLEOTIDE SEQUENCE [MRNA]</scope>
</reference>
<reference key="2">
    <citation type="journal article" date="1988" name="Biochemistry">
        <title>Correction of the cDNA-derived protein sequence of prostatic spermine binding protein: pivotal role of tandem mass spectrometry in sequence analysis.</title>
        <authorList>
            <person name="Anderegg R.J."/>
            <person name="Carr S.A."/>
            <person name="Huang I.-Y."/>
            <person name="Hiipakka R.A."/>
            <person name="Chang C."/>
            <person name="Liao S."/>
        </authorList>
    </citation>
    <scope>PROTEIN SEQUENCE</scope>
    <scope>PYROGLUTAMATE FORMATION AT GLN-18</scope>
    <scope>SEQUENCE REVISION</scope>
</reference>
<dbReference type="EMBL" id="J02675">
    <property type="protein sequence ID" value="AAA42113.1"/>
    <property type="status" value="ALT_SEQ"/>
    <property type="molecule type" value="mRNA"/>
</dbReference>
<dbReference type="PIR" id="A28714">
    <property type="entry name" value="A28714"/>
</dbReference>
<dbReference type="PIR" id="A29561">
    <property type="entry name" value="A29561"/>
</dbReference>
<dbReference type="SMR" id="P08723"/>
<dbReference type="FunCoup" id="P08723">
    <property type="interactions" value="2"/>
</dbReference>
<dbReference type="STRING" id="10116.ENSRNOP00000074401"/>
<dbReference type="GlyCosmos" id="P08723">
    <property type="glycosylation" value="1 site, No reported glycans"/>
</dbReference>
<dbReference type="GlyGen" id="P08723">
    <property type="glycosylation" value="1 site"/>
</dbReference>
<dbReference type="PhosphoSitePlus" id="P08723"/>
<dbReference type="PaxDb" id="10116-ENSRNOP00000065825"/>
<dbReference type="UCSC" id="RGD:3623">
    <property type="organism name" value="rat"/>
</dbReference>
<dbReference type="AGR" id="RGD:3623"/>
<dbReference type="RGD" id="3623">
    <property type="gene designation" value="Sbp"/>
</dbReference>
<dbReference type="InParanoid" id="P08723"/>
<dbReference type="OrthoDB" id="9606821at2759"/>
<dbReference type="PRO" id="PR:P08723"/>
<dbReference type="Proteomes" id="UP000002494">
    <property type="component" value="Unplaced"/>
</dbReference>
<dbReference type="GO" id="GO:0005615">
    <property type="term" value="C:extracellular space"/>
    <property type="evidence" value="ECO:0000318"/>
    <property type="project" value="GO_Central"/>
</dbReference>
<dbReference type="GO" id="GO:0030246">
    <property type="term" value="F:carbohydrate binding"/>
    <property type="evidence" value="ECO:0007669"/>
    <property type="project" value="UniProtKB-KW"/>
</dbReference>
<dbReference type="GO" id="GO:0019808">
    <property type="term" value="F:polyamine binding"/>
    <property type="evidence" value="ECO:0000304"/>
    <property type="project" value="RGD"/>
</dbReference>
<dbReference type="CDD" id="cd09611">
    <property type="entry name" value="Jacalin_ZG16_like"/>
    <property type="match status" value="1"/>
</dbReference>
<dbReference type="FunFam" id="2.100.10.30:FF:000006">
    <property type="entry name" value="Prostatic spermine-binding protein"/>
    <property type="match status" value="1"/>
</dbReference>
<dbReference type="Gene3D" id="2.100.10.30">
    <property type="entry name" value="Jacalin-like lectin domain"/>
    <property type="match status" value="1"/>
</dbReference>
<dbReference type="InterPro" id="IPR001229">
    <property type="entry name" value="Jacalin-like_lectin_dom"/>
</dbReference>
<dbReference type="InterPro" id="IPR036404">
    <property type="entry name" value="Jacalin-like_lectin_dom_sf"/>
</dbReference>
<dbReference type="InterPro" id="IPR052321">
    <property type="entry name" value="PolyBind_ProtTraffic"/>
</dbReference>
<dbReference type="PANTHER" id="PTHR33589">
    <property type="entry name" value="OS11G0524900 PROTEIN"/>
    <property type="match status" value="1"/>
</dbReference>
<dbReference type="PANTHER" id="PTHR33589:SF1">
    <property type="entry name" value="ZYMOGEN GRANULE PROTEIN 16 HOMOLOG B"/>
    <property type="match status" value="1"/>
</dbReference>
<dbReference type="Pfam" id="PF01419">
    <property type="entry name" value="Jacalin"/>
    <property type="match status" value="1"/>
</dbReference>
<dbReference type="SMART" id="SM00915">
    <property type="entry name" value="Jacalin"/>
    <property type="match status" value="1"/>
</dbReference>
<dbReference type="SUPFAM" id="SSF51101">
    <property type="entry name" value="Mannose-binding lectins"/>
    <property type="match status" value="1"/>
</dbReference>
<dbReference type="PROSITE" id="PS51752">
    <property type="entry name" value="JACALIN_LECTIN"/>
    <property type="match status" value="1"/>
</dbReference>
<proteinExistence type="evidence at protein level"/>
<organism>
    <name type="scientific">Rattus norvegicus</name>
    <name type="common">Rat</name>
    <dbReference type="NCBI Taxonomy" id="10116"/>
    <lineage>
        <taxon>Eukaryota</taxon>
        <taxon>Metazoa</taxon>
        <taxon>Chordata</taxon>
        <taxon>Craniata</taxon>
        <taxon>Vertebrata</taxon>
        <taxon>Euteleostomi</taxon>
        <taxon>Mammalia</taxon>
        <taxon>Eutheria</taxon>
        <taxon>Euarchontoglires</taxon>
        <taxon>Glires</taxon>
        <taxon>Rodentia</taxon>
        <taxon>Myomorpha</taxon>
        <taxon>Muroidea</taxon>
        <taxon>Muridae</taxon>
        <taxon>Murinae</taxon>
        <taxon>Rattus</taxon>
    </lineage>
</organism>
<gene>
    <name type="primary">Sbp</name>
</gene>
<sequence>MLLLVTLALLAGPTCRAQNILGNNVGTYFYVAGEEHGQLRGIRIFLTVIDLIKGIQLRFGGNWSDVYGSRSLKYKEFLLEDGEHVTQVSGTRKLCLTSLSFTTNKGRVVTFGVRRGLSFNESGGSDKYLVTVNGLYAPGLCLNGMGFKWKNIHDDFDDNDDDKEDDDDEHDDDNEEDHGDKDNDNDHDDDHDDDDDDKEDDNEEDVDDERDDKDDDEEDDDNDKENDKDDGEGSGDDDDNDDEDDDKDDDGGSGDDGDDGDDDEDDDGGDDDNGDEEEE</sequence>
<feature type="signal peptide">
    <location>
        <begin position="1"/>
        <end position="17"/>
    </location>
</feature>
<feature type="chain" id="PRO_0000022390" description="Prostatic spermine-binding protein">
    <location>
        <begin position="18"/>
        <end position="279"/>
    </location>
</feature>
<feature type="domain" description="Jacalin-type lectin" evidence="1">
    <location>
        <begin position="18"/>
        <end position="151"/>
    </location>
</feature>
<feature type="region of interest" description="Disordered" evidence="2">
    <location>
        <begin position="160"/>
        <end position="279"/>
    </location>
</feature>
<feature type="compositionally biased region" description="Acidic residues" evidence="2">
    <location>
        <begin position="160"/>
        <end position="177"/>
    </location>
</feature>
<feature type="compositionally biased region" description="Acidic residues" evidence="2">
    <location>
        <begin position="185"/>
        <end position="279"/>
    </location>
</feature>
<feature type="modified residue" description="Pyrrolidone carboxylic acid" evidence="3">
    <location>
        <position position="18"/>
    </location>
</feature>
<feature type="glycosylation site" description="N-linked (GlcNAc...) asparagine">
    <location>
        <position position="62"/>
    </location>
</feature>
<accession>P08723</accession>
<protein>
    <recommendedName>
        <fullName>Prostatic spermine-binding protein</fullName>
        <shortName>SBP</shortName>
    </recommendedName>
</protein>